<organism>
    <name type="scientific">Paraburkholderia xenovorans (strain LB400)</name>
    <dbReference type="NCBI Taxonomy" id="266265"/>
    <lineage>
        <taxon>Bacteria</taxon>
        <taxon>Pseudomonadati</taxon>
        <taxon>Pseudomonadota</taxon>
        <taxon>Betaproteobacteria</taxon>
        <taxon>Burkholderiales</taxon>
        <taxon>Burkholderiaceae</taxon>
        <taxon>Paraburkholderia</taxon>
    </lineage>
</organism>
<reference key="1">
    <citation type="journal article" date="2006" name="Proc. Natl. Acad. Sci. U.S.A.">
        <title>Burkholderia xenovorans LB400 harbors a multi-replicon, 9.73-Mbp genome shaped for versatility.</title>
        <authorList>
            <person name="Chain P.S.G."/>
            <person name="Denef V.J."/>
            <person name="Konstantinidis K.T."/>
            <person name="Vergez L.M."/>
            <person name="Agullo L."/>
            <person name="Reyes V.L."/>
            <person name="Hauser L."/>
            <person name="Cordova M."/>
            <person name="Gomez L."/>
            <person name="Gonzalez M."/>
            <person name="Land M."/>
            <person name="Lao V."/>
            <person name="Larimer F."/>
            <person name="LiPuma J.J."/>
            <person name="Mahenthiralingam E."/>
            <person name="Malfatti S.A."/>
            <person name="Marx C.J."/>
            <person name="Parnell J.J."/>
            <person name="Ramette A."/>
            <person name="Richardson P."/>
            <person name="Seeger M."/>
            <person name="Smith D."/>
            <person name="Spilker T."/>
            <person name="Sul W.J."/>
            <person name="Tsoi T.V."/>
            <person name="Ulrich L.E."/>
            <person name="Zhulin I.B."/>
            <person name="Tiedje J.M."/>
        </authorList>
    </citation>
    <scope>NUCLEOTIDE SEQUENCE [LARGE SCALE GENOMIC DNA]</scope>
    <source>
        <strain>LB400</strain>
    </source>
</reference>
<proteinExistence type="inferred from homology"/>
<gene>
    <name evidence="1" type="primary">pth</name>
    <name type="ordered locus">Bxeno_A0327</name>
    <name type="ORF">Bxe_A4135</name>
</gene>
<sequence length="200" mass="22268">MIKLIVGLGNPGAEYTATRHNAGFWLVDQLAREAGTTLRDERRFHGFYAKARLHGEEVHLLEPQTYMNRSGQSVVALAQFFKILPDEILVAHDELDMPPGSVKLKLGGGSGGHNGLKDITAHLSSQQYWRLRIGIGHPRDLIPESARAGARPDVANYVLKPPRREEQDVIDASIERALAVMPQVIKGELERAMMQLHRNP</sequence>
<feature type="chain" id="PRO_0000264015" description="Peptidyl-tRNA hydrolase">
    <location>
        <begin position="1"/>
        <end position="200"/>
    </location>
</feature>
<feature type="active site" description="Proton acceptor" evidence="1">
    <location>
        <position position="20"/>
    </location>
</feature>
<feature type="binding site" evidence="1">
    <location>
        <position position="15"/>
    </location>
    <ligand>
        <name>tRNA</name>
        <dbReference type="ChEBI" id="CHEBI:17843"/>
    </ligand>
</feature>
<feature type="binding site" evidence="1">
    <location>
        <position position="66"/>
    </location>
    <ligand>
        <name>tRNA</name>
        <dbReference type="ChEBI" id="CHEBI:17843"/>
    </ligand>
</feature>
<feature type="binding site" evidence="1">
    <location>
        <position position="68"/>
    </location>
    <ligand>
        <name>tRNA</name>
        <dbReference type="ChEBI" id="CHEBI:17843"/>
    </ligand>
</feature>
<feature type="binding site" evidence="1">
    <location>
        <position position="114"/>
    </location>
    <ligand>
        <name>tRNA</name>
        <dbReference type="ChEBI" id="CHEBI:17843"/>
    </ligand>
</feature>
<feature type="site" description="Discriminates between blocked and unblocked aminoacyl-tRNA" evidence="1">
    <location>
        <position position="10"/>
    </location>
</feature>
<feature type="site" description="Stabilizes the basic form of H active site to accept a proton" evidence="1">
    <location>
        <position position="93"/>
    </location>
</feature>
<name>PTH_PARXL</name>
<comment type="function">
    <text evidence="1">Hydrolyzes ribosome-free peptidyl-tRNAs (with 1 or more amino acids incorporated), which drop off the ribosome during protein synthesis, or as a result of ribosome stalling.</text>
</comment>
<comment type="function">
    <text evidence="1">Catalyzes the release of premature peptidyl moieties from peptidyl-tRNA molecules trapped in stalled 50S ribosomal subunits, and thus maintains levels of free tRNAs and 50S ribosomes.</text>
</comment>
<comment type="catalytic activity">
    <reaction evidence="1">
        <text>an N-acyl-L-alpha-aminoacyl-tRNA + H2O = an N-acyl-L-amino acid + a tRNA + H(+)</text>
        <dbReference type="Rhea" id="RHEA:54448"/>
        <dbReference type="Rhea" id="RHEA-COMP:10123"/>
        <dbReference type="Rhea" id="RHEA-COMP:13883"/>
        <dbReference type="ChEBI" id="CHEBI:15377"/>
        <dbReference type="ChEBI" id="CHEBI:15378"/>
        <dbReference type="ChEBI" id="CHEBI:59874"/>
        <dbReference type="ChEBI" id="CHEBI:78442"/>
        <dbReference type="ChEBI" id="CHEBI:138191"/>
        <dbReference type="EC" id="3.1.1.29"/>
    </reaction>
</comment>
<comment type="subunit">
    <text evidence="1">Monomer.</text>
</comment>
<comment type="subcellular location">
    <subcellularLocation>
        <location evidence="1">Cytoplasm</location>
    </subcellularLocation>
</comment>
<comment type="similarity">
    <text evidence="1">Belongs to the PTH family.</text>
</comment>
<accession>Q145X4</accession>
<dbReference type="EC" id="3.1.1.29" evidence="1"/>
<dbReference type="EMBL" id="CP000270">
    <property type="protein sequence ID" value="ABE28865.1"/>
    <property type="molecule type" value="Genomic_DNA"/>
</dbReference>
<dbReference type="RefSeq" id="WP_011486697.1">
    <property type="nucleotide sequence ID" value="NC_007951.1"/>
</dbReference>
<dbReference type="SMR" id="Q145X4"/>
<dbReference type="STRING" id="266265.Bxe_A4135"/>
<dbReference type="KEGG" id="bxb:DR64_1812"/>
<dbReference type="KEGG" id="bxe:Bxe_A4135"/>
<dbReference type="PATRIC" id="fig|266265.5.peg.347"/>
<dbReference type="eggNOG" id="COG0193">
    <property type="taxonomic scope" value="Bacteria"/>
</dbReference>
<dbReference type="OrthoDB" id="9800507at2"/>
<dbReference type="Proteomes" id="UP000001817">
    <property type="component" value="Chromosome 1"/>
</dbReference>
<dbReference type="GO" id="GO:0005737">
    <property type="term" value="C:cytoplasm"/>
    <property type="evidence" value="ECO:0007669"/>
    <property type="project" value="UniProtKB-SubCell"/>
</dbReference>
<dbReference type="GO" id="GO:0004045">
    <property type="term" value="F:peptidyl-tRNA hydrolase activity"/>
    <property type="evidence" value="ECO:0007669"/>
    <property type="project" value="UniProtKB-UniRule"/>
</dbReference>
<dbReference type="GO" id="GO:0000049">
    <property type="term" value="F:tRNA binding"/>
    <property type="evidence" value="ECO:0007669"/>
    <property type="project" value="UniProtKB-UniRule"/>
</dbReference>
<dbReference type="GO" id="GO:0006515">
    <property type="term" value="P:protein quality control for misfolded or incompletely synthesized proteins"/>
    <property type="evidence" value="ECO:0007669"/>
    <property type="project" value="UniProtKB-UniRule"/>
</dbReference>
<dbReference type="GO" id="GO:0072344">
    <property type="term" value="P:rescue of stalled ribosome"/>
    <property type="evidence" value="ECO:0007669"/>
    <property type="project" value="UniProtKB-UniRule"/>
</dbReference>
<dbReference type="CDD" id="cd00462">
    <property type="entry name" value="PTH"/>
    <property type="match status" value="1"/>
</dbReference>
<dbReference type="FunFam" id="3.40.50.1470:FF:000001">
    <property type="entry name" value="Peptidyl-tRNA hydrolase"/>
    <property type="match status" value="1"/>
</dbReference>
<dbReference type="Gene3D" id="3.40.50.1470">
    <property type="entry name" value="Peptidyl-tRNA hydrolase"/>
    <property type="match status" value="1"/>
</dbReference>
<dbReference type="HAMAP" id="MF_00083">
    <property type="entry name" value="Pept_tRNA_hydro_bact"/>
    <property type="match status" value="1"/>
</dbReference>
<dbReference type="InterPro" id="IPR001328">
    <property type="entry name" value="Pept_tRNA_hydro"/>
</dbReference>
<dbReference type="InterPro" id="IPR018171">
    <property type="entry name" value="Pept_tRNA_hydro_CS"/>
</dbReference>
<dbReference type="InterPro" id="IPR036416">
    <property type="entry name" value="Pept_tRNA_hydro_sf"/>
</dbReference>
<dbReference type="NCBIfam" id="TIGR00447">
    <property type="entry name" value="pth"/>
    <property type="match status" value="1"/>
</dbReference>
<dbReference type="PANTHER" id="PTHR17224">
    <property type="entry name" value="PEPTIDYL-TRNA HYDROLASE"/>
    <property type="match status" value="1"/>
</dbReference>
<dbReference type="PANTHER" id="PTHR17224:SF1">
    <property type="entry name" value="PEPTIDYL-TRNA HYDROLASE"/>
    <property type="match status" value="1"/>
</dbReference>
<dbReference type="Pfam" id="PF01195">
    <property type="entry name" value="Pept_tRNA_hydro"/>
    <property type="match status" value="1"/>
</dbReference>
<dbReference type="SUPFAM" id="SSF53178">
    <property type="entry name" value="Peptidyl-tRNA hydrolase-like"/>
    <property type="match status" value="1"/>
</dbReference>
<dbReference type="PROSITE" id="PS01195">
    <property type="entry name" value="PEPT_TRNA_HYDROL_1"/>
    <property type="match status" value="1"/>
</dbReference>
<dbReference type="PROSITE" id="PS01196">
    <property type="entry name" value="PEPT_TRNA_HYDROL_2"/>
    <property type="match status" value="1"/>
</dbReference>
<protein>
    <recommendedName>
        <fullName evidence="1">Peptidyl-tRNA hydrolase</fullName>
        <shortName evidence="1">Pth</shortName>
        <ecNumber evidence="1">3.1.1.29</ecNumber>
    </recommendedName>
</protein>
<keyword id="KW-0963">Cytoplasm</keyword>
<keyword id="KW-0378">Hydrolase</keyword>
<keyword id="KW-1185">Reference proteome</keyword>
<keyword id="KW-0694">RNA-binding</keyword>
<keyword id="KW-0820">tRNA-binding</keyword>
<evidence type="ECO:0000255" key="1">
    <source>
        <dbReference type="HAMAP-Rule" id="MF_00083"/>
    </source>
</evidence>